<protein>
    <recommendedName>
        <fullName>Disintegrin EMF10A</fullName>
        <shortName>EMF-10A</shortName>
    </recommendedName>
    <alternativeName>
        <fullName>Eristocophin I</fullName>
    </alternativeName>
    <alternativeName>
        <fullName>Platelet aggregation activation inhibitor</fullName>
    </alternativeName>
</protein>
<feature type="chain" id="PRO_0000101803" description="Disintegrin EMF10A">
    <location>
        <begin position="1"/>
        <end position="69"/>
    </location>
</feature>
<feature type="domain" description="Disintegrin" evidence="1">
    <location>
        <begin position="1"/>
        <end position="66"/>
    </location>
</feature>
<feature type="short sequence motif" description="Cell attachment site">
    <location>
        <begin position="43"/>
        <end position="45"/>
    </location>
</feature>
<feature type="disulfide bond" evidence="1 3">
    <location>
        <begin position="7"/>
        <end position="30"/>
    </location>
</feature>
<feature type="disulfide bond" description="Interchain (with C-11 in EMF10B)" evidence="1 3">
    <location>
        <position position="8"/>
    </location>
</feature>
<feature type="disulfide bond" description="Interchain (with C-16 in EMF10B)" evidence="1 3">
    <location>
        <position position="13"/>
    </location>
</feature>
<feature type="disulfide bond" evidence="1 3">
    <location>
        <begin position="21"/>
        <end position="27"/>
    </location>
</feature>
<feature type="disulfide bond" evidence="1 3">
    <location>
        <begin position="26"/>
        <end position="51"/>
    </location>
</feature>
<feature type="disulfide bond" evidence="1 3">
    <location>
        <begin position="39"/>
        <end position="58"/>
    </location>
</feature>
<name>DIDAA_ERIMA</name>
<evidence type="ECO:0000255" key="1">
    <source>
        <dbReference type="PROSITE-ProRule" id="PRU00068"/>
    </source>
</evidence>
<evidence type="ECO:0000269" key="2">
    <source>
    </source>
</evidence>
<evidence type="ECO:0000269" key="3">
    <source>
    </source>
</evidence>
<evidence type="ECO:0000305" key="4"/>
<evidence type="ECO:0000305" key="5">
    <source>
    </source>
</evidence>
<proteinExistence type="evidence at protein level"/>
<sequence length="69" mass="7554">MNSANPCCDPITCKPKKGEHCVSGPCCRNCKFLNPGTICKKGRGDNLNDYCTGVSSDCPRNPWKSEEED</sequence>
<accession>P81742</accession>
<comment type="function">
    <text evidence="2">Extremely potent and selective inhibitor of integrin alpha-5/beta-1 (ITGA5/ITGB1). Partially inhibits adhesion of cells expressing alpha-IIb/beta-3 (ITGA2B/ITGB3), alpha-V/beta-3 (ITGAV/ITGB3), and alpha-4/beta-1 (ITGA4/ITGB1) to appropriate ligands only at concentration higher than 500 nM. Weakly inhibits ADP-induced platelet aggregation.</text>
</comment>
<comment type="subunit">
    <text evidence="3">Heterodimer with EMF10B; disulfide-linked.</text>
</comment>
<comment type="subcellular location">
    <subcellularLocation>
        <location>Secreted</location>
    </subcellularLocation>
</comment>
<comment type="tissue specificity">
    <text>Expressed by the venom gland.</text>
</comment>
<comment type="similarity">
    <text evidence="4">Belongs to the disintegrin family. Dimeric disintegrin subfamily.</text>
</comment>
<comment type="caution">
    <text evidence="5">Eristocophin I appears to represent degradation product of EMF10A.</text>
</comment>
<keyword id="KW-1217">Cell adhesion impairing toxin</keyword>
<keyword id="KW-0903">Direct protein sequencing</keyword>
<keyword id="KW-1015">Disulfide bond</keyword>
<keyword id="KW-1199">Hemostasis impairing toxin</keyword>
<keyword id="KW-1201">Platelet aggregation inhibiting toxin</keyword>
<keyword id="KW-0964">Secreted</keyword>
<keyword id="KW-0800">Toxin</keyword>
<dbReference type="SMR" id="P81742"/>
<dbReference type="GO" id="GO:0005576">
    <property type="term" value="C:extracellular region"/>
    <property type="evidence" value="ECO:0007669"/>
    <property type="project" value="UniProtKB-SubCell"/>
</dbReference>
<dbReference type="GO" id="GO:0090729">
    <property type="term" value="F:toxin activity"/>
    <property type="evidence" value="ECO:0007669"/>
    <property type="project" value="UniProtKB-KW"/>
</dbReference>
<dbReference type="Gene3D" id="4.10.70.10">
    <property type="entry name" value="Disintegrin domain"/>
    <property type="match status" value="1"/>
</dbReference>
<dbReference type="InterPro" id="IPR018358">
    <property type="entry name" value="Disintegrin_CS"/>
</dbReference>
<dbReference type="InterPro" id="IPR001762">
    <property type="entry name" value="Disintegrin_dom"/>
</dbReference>
<dbReference type="InterPro" id="IPR036436">
    <property type="entry name" value="Disintegrin_dom_sf"/>
</dbReference>
<dbReference type="PANTHER" id="PTHR11905">
    <property type="entry name" value="ADAM A DISINTEGRIN AND METALLOPROTEASE DOMAIN"/>
    <property type="match status" value="1"/>
</dbReference>
<dbReference type="PANTHER" id="PTHR11905:SF159">
    <property type="entry name" value="ADAM METALLOPROTEASE"/>
    <property type="match status" value="1"/>
</dbReference>
<dbReference type="Pfam" id="PF00200">
    <property type="entry name" value="Disintegrin"/>
    <property type="match status" value="1"/>
</dbReference>
<dbReference type="PRINTS" id="PR00289">
    <property type="entry name" value="DISINTEGRIN"/>
</dbReference>
<dbReference type="SMART" id="SM00050">
    <property type="entry name" value="DISIN"/>
    <property type="match status" value="1"/>
</dbReference>
<dbReference type="SUPFAM" id="SSF57552">
    <property type="entry name" value="Blood coagulation inhibitor (disintegrin)"/>
    <property type="match status" value="1"/>
</dbReference>
<dbReference type="PROSITE" id="PS00427">
    <property type="entry name" value="DISINTEGRIN_1"/>
    <property type="match status" value="1"/>
</dbReference>
<dbReference type="PROSITE" id="PS50214">
    <property type="entry name" value="DISINTEGRIN_2"/>
    <property type="match status" value="1"/>
</dbReference>
<organism>
    <name type="scientific">Eristicophis macmahoni</name>
    <name type="common">Leaf-nosed viper</name>
    <dbReference type="NCBI Taxonomy" id="110227"/>
    <lineage>
        <taxon>Eukaryota</taxon>
        <taxon>Metazoa</taxon>
        <taxon>Chordata</taxon>
        <taxon>Craniata</taxon>
        <taxon>Vertebrata</taxon>
        <taxon>Euteleostomi</taxon>
        <taxon>Lepidosauria</taxon>
        <taxon>Squamata</taxon>
        <taxon>Bifurcata</taxon>
        <taxon>Unidentata</taxon>
        <taxon>Episquamata</taxon>
        <taxon>Toxicofera</taxon>
        <taxon>Serpentes</taxon>
        <taxon>Colubroidea</taxon>
        <taxon>Viperidae</taxon>
        <taxon>Viperinae</taxon>
        <taxon>Eristicophis</taxon>
    </lineage>
</organism>
<reference key="1">
    <citation type="journal article" date="1999" name="Biochemistry">
        <title>Structural and functional characterization of EMF10, a heterodimeric disintegrin from Eristocophis macmahoni venom that selectively inhibits alpha 5 beta 1 integrin.</title>
        <authorList>
            <person name="Marcinkiewicz C."/>
            <person name="Calvete J.J."/>
            <person name="Vijay-Kumar S."/>
            <person name="Marcinkiewicz M.M."/>
            <person name="Raida M."/>
            <person name="Schick P."/>
            <person name="Lobb R.R."/>
            <person name="Niewiarowski S."/>
        </authorList>
    </citation>
    <scope>PROTEIN SEQUENCE</scope>
    <scope>FUNCTION</scope>
    <source>
        <tissue>Venom</tissue>
    </source>
</reference>
<reference key="2">
    <citation type="journal article" date="1992" name="Peptides">
        <title>Characterization of two platelet aggregation inhibitor-like polypeptides from viper venom.</title>
        <authorList>
            <person name="Siddiqi A.R."/>
            <person name="Persson B."/>
            <person name="Zaidi Z.H."/>
            <person name="Jornvall H."/>
        </authorList>
    </citation>
    <scope>PROTEIN SEQUENCE OF 1-62</scope>
    <scope>AMINO-ACID COMPOSITION</scope>
    <source>
        <tissue>Venom</tissue>
    </source>
</reference>
<reference key="3">
    <citation type="journal article" date="2000" name="Biochem. J.">
        <title>Disulphide-bond pattern and molecular modelling of the dimeric disintegrin EMF-10, a potent and selective integrin alpha5beta1 antagonist from Eristocophis macmahoni venom.</title>
        <authorList>
            <person name="Calvete J.J."/>
            <person name="Jurgens M."/>
            <person name="Marcinkiewicz C."/>
            <person name="Romero A."/>
            <person name="Schrader M."/>
            <person name="Niewiarowski S."/>
        </authorList>
    </citation>
    <scope>DISULFIDE BONDS</scope>
</reference>